<accession>Q1QZ16</accession>
<gene>
    <name evidence="1" type="primary">glk</name>
    <name type="ordered locus">Csal_0935</name>
</gene>
<dbReference type="EC" id="2.7.1.2" evidence="1"/>
<dbReference type="EMBL" id="CP000285">
    <property type="protein sequence ID" value="ABE58292.1"/>
    <property type="molecule type" value="Genomic_DNA"/>
</dbReference>
<dbReference type="RefSeq" id="WP_011506238.1">
    <property type="nucleotide sequence ID" value="NC_007963.1"/>
</dbReference>
<dbReference type="SMR" id="Q1QZ16"/>
<dbReference type="STRING" id="290398.Csal_0935"/>
<dbReference type="GeneID" id="95333691"/>
<dbReference type="KEGG" id="csa:Csal_0935"/>
<dbReference type="eggNOG" id="COG0837">
    <property type="taxonomic scope" value="Bacteria"/>
</dbReference>
<dbReference type="HOGENOM" id="CLU_042582_1_0_6"/>
<dbReference type="OrthoDB" id="9800595at2"/>
<dbReference type="Proteomes" id="UP000000239">
    <property type="component" value="Chromosome"/>
</dbReference>
<dbReference type="GO" id="GO:0005829">
    <property type="term" value="C:cytosol"/>
    <property type="evidence" value="ECO:0007669"/>
    <property type="project" value="TreeGrafter"/>
</dbReference>
<dbReference type="GO" id="GO:0005524">
    <property type="term" value="F:ATP binding"/>
    <property type="evidence" value="ECO:0007669"/>
    <property type="project" value="UniProtKB-UniRule"/>
</dbReference>
<dbReference type="GO" id="GO:0005536">
    <property type="term" value="F:D-glucose binding"/>
    <property type="evidence" value="ECO:0007669"/>
    <property type="project" value="InterPro"/>
</dbReference>
<dbReference type="GO" id="GO:0004340">
    <property type="term" value="F:glucokinase activity"/>
    <property type="evidence" value="ECO:0007669"/>
    <property type="project" value="UniProtKB-UniRule"/>
</dbReference>
<dbReference type="GO" id="GO:0006096">
    <property type="term" value="P:glycolytic process"/>
    <property type="evidence" value="ECO:0007669"/>
    <property type="project" value="UniProtKB-UniRule"/>
</dbReference>
<dbReference type="CDD" id="cd24008">
    <property type="entry name" value="ASKHA_NBD_GLK"/>
    <property type="match status" value="1"/>
</dbReference>
<dbReference type="Gene3D" id="3.30.420.40">
    <property type="match status" value="1"/>
</dbReference>
<dbReference type="Gene3D" id="3.40.367.20">
    <property type="match status" value="1"/>
</dbReference>
<dbReference type="HAMAP" id="MF_00524">
    <property type="entry name" value="Glucokinase"/>
    <property type="match status" value="1"/>
</dbReference>
<dbReference type="InterPro" id="IPR043129">
    <property type="entry name" value="ATPase_NBD"/>
</dbReference>
<dbReference type="InterPro" id="IPR050201">
    <property type="entry name" value="Bacterial_glucokinase"/>
</dbReference>
<dbReference type="InterPro" id="IPR003836">
    <property type="entry name" value="Glucokinase"/>
</dbReference>
<dbReference type="NCBIfam" id="TIGR00749">
    <property type="entry name" value="glk"/>
    <property type="match status" value="1"/>
</dbReference>
<dbReference type="PANTHER" id="PTHR47690">
    <property type="entry name" value="GLUCOKINASE"/>
    <property type="match status" value="1"/>
</dbReference>
<dbReference type="PANTHER" id="PTHR47690:SF1">
    <property type="entry name" value="GLUCOKINASE"/>
    <property type="match status" value="1"/>
</dbReference>
<dbReference type="Pfam" id="PF02685">
    <property type="entry name" value="Glucokinase"/>
    <property type="match status" value="1"/>
</dbReference>
<dbReference type="SUPFAM" id="SSF53067">
    <property type="entry name" value="Actin-like ATPase domain"/>
    <property type="match status" value="1"/>
</dbReference>
<proteinExistence type="inferred from homology"/>
<evidence type="ECO:0000255" key="1">
    <source>
        <dbReference type="HAMAP-Rule" id="MF_00524"/>
    </source>
</evidence>
<comment type="catalytic activity">
    <reaction evidence="1">
        <text>D-glucose + ATP = D-glucose 6-phosphate + ADP + H(+)</text>
        <dbReference type="Rhea" id="RHEA:17825"/>
        <dbReference type="ChEBI" id="CHEBI:4167"/>
        <dbReference type="ChEBI" id="CHEBI:15378"/>
        <dbReference type="ChEBI" id="CHEBI:30616"/>
        <dbReference type="ChEBI" id="CHEBI:61548"/>
        <dbReference type="ChEBI" id="CHEBI:456216"/>
        <dbReference type="EC" id="2.7.1.2"/>
    </reaction>
</comment>
<comment type="subcellular location">
    <subcellularLocation>
        <location evidence="1">Cytoplasm</location>
    </subcellularLocation>
</comment>
<comment type="similarity">
    <text evidence="1">Belongs to the bacterial glucokinase family.</text>
</comment>
<sequence length="319" mass="34536">MTRPALIGDIGGTNARFALVTPGAFDLHDIRTLPCAHYPSLSDAIRAYLKEVGAEMPTEACLAFACPVHDDEVRMTNNAWRFSKRQVAEEFGFTLFKVINDFTAQALGVPHVADDELVALGDGEAAPGCTRLIFGPGTGLGMAGLFPGQHDWIPLPTEGGHISFAPTDQHERDLLAYFQARYGRVSVERILCGQGLLDLYRAHAQLAKQVARYNTPAEVTGAARAGDPLARNALERFLKILGDVSGDAALMLGARGGVYLCGGILPRLLDWLPHSHFRDAFADKGRMHAYTAHIPVWVVTAPWNGLLGACEALHNEEVT</sequence>
<reference key="1">
    <citation type="journal article" date="2011" name="Stand. Genomic Sci.">
        <title>Complete genome sequence of the halophilic and highly halotolerant Chromohalobacter salexigens type strain (1H11(T)).</title>
        <authorList>
            <person name="Copeland A."/>
            <person name="O'Connor K."/>
            <person name="Lucas S."/>
            <person name="Lapidus A."/>
            <person name="Berry K.W."/>
            <person name="Detter J.C."/>
            <person name="Del Rio T.G."/>
            <person name="Hammon N."/>
            <person name="Dalin E."/>
            <person name="Tice H."/>
            <person name="Pitluck S."/>
            <person name="Bruce D."/>
            <person name="Goodwin L."/>
            <person name="Han C."/>
            <person name="Tapia R."/>
            <person name="Saunders E."/>
            <person name="Schmutz J."/>
            <person name="Brettin T."/>
            <person name="Larimer F."/>
            <person name="Land M."/>
            <person name="Hauser L."/>
            <person name="Vargas C."/>
            <person name="Nieto J.J."/>
            <person name="Kyrpides N.C."/>
            <person name="Ivanova N."/>
            <person name="Goker M."/>
            <person name="Klenk H.P."/>
            <person name="Csonka L.N."/>
            <person name="Woyke T."/>
        </authorList>
    </citation>
    <scope>NUCLEOTIDE SEQUENCE [LARGE SCALE GENOMIC DNA]</scope>
    <source>
        <strain>ATCC BAA-138 / DSM 3043 / CIP 106854 / NCIMB 13768 / 1H11</strain>
    </source>
</reference>
<organism>
    <name type="scientific">Chromohalobacter salexigens (strain ATCC BAA-138 / DSM 3043 / CIP 106854 / NCIMB 13768 / 1H11)</name>
    <dbReference type="NCBI Taxonomy" id="290398"/>
    <lineage>
        <taxon>Bacteria</taxon>
        <taxon>Pseudomonadati</taxon>
        <taxon>Pseudomonadota</taxon>
        <taxon>Gammaproteobacteria</taxon>
        <taxon>Oceanospirillales</taxon>
        <taxon>Halomonadaceae</taxon>
        <taxon>Chromohalobacter</taxon>
    </lineage>
</organism>
<protein>
    <recommendedName>
        <fullName evidence="1">Glucokinase</fullName>
        <ecNumber evidence="1">2.7.1.2</ecNumber>
    </recommendedName>
    <alternativeName>
        <fullName evidence="1">Glucose kinase</fullName>
    </alternativeName>
</protein>
<keyword id="KW-0067">ATP-binding</keyword>
<keyword id="KW-0963">Cytoplasm</keyword>
<keyword id="KW-0324">Glycolysis</keyword>
<keyword id="KW-0418">Kinase</keyword>
<keyword id="KW-0547">Nucleotide-binding</keyword>
<keyword id="KW-1185">Reference proteome</keyword>
<keyword id="KW-0808">Transferase</keyword>
<feature type="chain" id="PRO_0000268770" description="Glucokinase">
    <location>
        <begin position="1"/>
        <end position="319"/>
    </location>
</feature>
<feature type="binding site" evidence="1">
    <location>
        <begin position="8"/>
        <end position="13"/>
    </location>
    <ligand>
        <name>ATP</name>
        <dbReference type="ChEBI" id="CHEBI:30616"/>
    </ligand>
</feature>
<name>GLK_CHRSD</name>